<organism>
    <name type="scientific">Chromohalobacter salexigens (strain ATCC BAA-138 / DSM 3043 / CIP 106854 / NCIMB 13768 / 1H11)</name>
    <dbReference type="NCBI Taxonomy" id="290398"/>
    <lineage>
        <taxon>Bacteria</taxon>
        <taxon>Pseudomonadati</taxon>
        <taxon>Pseudomonadota</taxon>
        <taxon>Gammaproteobacteria</taxon>
        <taxon>Oceanospirillales</taxon>
        <taxon>Halomonadaceae</taxon>
        <taxon>Chromohalobacter</taxon>
    </lineage>
</organism>
<proteinExistence type="inferred from homology"/>
<name>ACP_CHRSD</name>
<keyword id="KW-0963">Cytoplasm</keyword>
<keyword id="KW-0275">Fatty acid biosynthesis</keyword>
<keyword id="KW-0276">Fatty acid metabolism</keyword>
<keyword id="KW-0444">Lipid biosynthesis</keyword>
<keyword id="KW-0443">Lipid metabolism</keyword>
<keyword id="KW-0596">Phosphopantetheine</keyword>
<keyword id="KW-0597">Phosphoprotein</keyword>
<keyword id="KW-1185">Reference proteome</keyword>
<sequence length="77" mass="8716">MSTIEERVKKVVAERLNVKEEDIQNTSSFTEDLGADSLDTVELVMALEEEFDTEIPDEEAEKITTVQEAIDYVVAHQ</sequence>
<evidence type="ECO:0000255" key="1">
    <source>
        <dbReference type="HAMAP-Rule" id="MF_01217"/>
    </source>
</evidence>
<evidence type="ECO:0000255" key="2">
    <source>
        <dbReference type="PROSITE-ProRule" id="PRU00258"/>
    </source>
</evidence>
<comment type="function">
    <text evidence="1">Carrier of the growing fatty acid chain in fatty acid biosynthesis.</text>
</comment>
<comment type="pathway">
    <text evidence="1">Lipid metabolism; fatty acid biosynthesis.</text>
</comment>
<comment type="subcellular location">
    <subcellularLocation>
        <location evidence="1">Cytoplasm</location>
    </subcellularLocation>
</comment>
<comment type="PTM">
    <text evidence="1">4'-phosphopantetheine is transferred from CoA to a specific serine of apo-ACP by AcpS. This modification is essential for activity because fatty acids are bound in thioester linkage to the sulfhydryl of the prosthetic group.</text>
</comment>
<comment type="similarity">
    <text evidence="1">Belongs to the acyl carrier protein (ACP) family.</text>
</comment>
<dbReference type="EMBL" id="CP000285">
    <property type="protein sequence ID" value="ABE58955.1"/>
    <property type="molecule type" value="Genomic_DNA"/>
</dbReference>
<dbReference type="RefSeq" id="WP_011506901.1">
    <property type="nucleotide sequence ID" value="NC_007963.1"/>
</dbReference>
<dbReference type="SMR" id="Q1QX53"/>
<dbReference type="STRING" id="290398.Csal_1602"/>
<dbReference type="GeneID" id="95334333"/>
<dbReference type="KEGG" id="csa:Csal_1602"/>
<dbReference type="eggNOG" id="COG0236">
    <property type="taxonomic scope" value="Bacteria"/>
</dbReference>
<dbReference type="HOGENOM" id="CLU_108696_5_1_6"/>
<dbReference type="OrthoDB" id="9804551at2"/>
<dbReference type="UniPathway" id="UPA00094"/>
<dbReference type="Proteomes" id="UP000000239">
    <property type="component" value="Chromosome"/>
</dbReference>
<dbReference type="GO" id="GO:0005829">
    <property type="term" value="C:cytosol"/>
    <property type="evidence" value="ECO:0007669"/>
    <property type="project" value="TreeGrafter"/>
</dbReference>
<dbReference type="GO" id="GO:0016020">
    <property type="term" value="C:membrane"/>
    <property type="evidence" value="ECO:0007669"/>
    <property type="project" value="GOC"/>
</dbReference>
<dbReference type="GO" id="GO:0000035">
    <property type="term" value="F:acyl binding"/>
    <property type="evidence" value="ECO:0007669"/>
    <property type="project" value="TreeGrafter"/>
</dbReference>
<dbReference type="GO" id="GO:0000036">
    <property type="term" value="F:acyl carrier activity"/>
    <property type="evidence" value="ECO:0007669"/>
    <property type="project" value="UniProtKB-UniRule"/>
</dbReference>
<dbReference type="GO" id="GO:0009245">
    <property type="term" value="P:lipid A biosynthetic process"/>
    <property type="evidence" value="ECO:0007669"/>
    <property type="project" value="TreeGrafter"/>
</dbReference>
<dbReference type="FunFam" id="1.10.1200.10:FF:000001">
    <property type="entry name" value="Acyl carrier protein"/>
    <property type="match status" value="1"/>
</dbReference>
<dbReference type="Gene3D" id="1.10.1200.10">
    <property type="entry name" value="ACP-like"/>
    <property type="match status" value="1"/>
</dbReference>
<dbReference type="HAMAP" id="MF_01217">
    <property type="entry name" value="Acyl_carrier"/>
    <property type="match status" value="1"/>
</dbReference>
<dbReference type="InterPro" id="IPR003231">
    <property type="entry name" value="ACP"/>
</dbReference>
<dbReference type="InterPro" id="IPR036736">
    <property type="entry name" value="ACP-like_sf"/>
</dbReference>
<dbReference type="InterPro" id="IPR009081">
    <property type="entry name" value="PP-bd_ACP"/>
</dbReference>
<dbReference type="InterPro" id="IPR006162">
    <property type="entry name" value="Ppantetheine_attach_site"/>
</dbReference>
<dbReference type="NCBIfam" id="TIGR00517">
    <property type="entry name" value="acyl_carrier"/>
    <property type="match status" value="1"/>
</dbReference>
<dbReference type="NCBIfam" id="NF002148">
    <property type="entry name" value="PRK00982.1-2"/>
    <property type="match status" value="1"/>
</dbReference>
<dbReference type="NCBIfam" id="NF002149">
    <property type="entry name" value="PRK00982.1-3"/>
    <property type="match status" value="1"/>
</dbReference>
<dbReference type="NCBIfam" id="NF002150">
    <property type="entry name" value="PRK00982.1-4"/>
    <property type="match status" value="1"/>
</dbReference>
<dbReference type="NCBIfam" id="NF002151">
    <property type="entry name" value="PRK00982.1-5"/>
    <property type="match status" value="1"/>
</dbReference>
<dbReference type="PANTHER" id="PTHR20863">
    <property type="entry name" value="ACYL CARRIER PROTEIN"/>
    <property type="match status" value="1"/>
</dbReference>
<dbReference type="PANTHER" id="PTHR20863:SF76">
    <property type="entry name" value="CARRIER DOMAIN-CONTAINING PROTEIN"/>
    <property type="match status" value="1"/>
</dbReference>
<dbReference type="Pfam" id="PF00550">
    <property type="entry name" value="PP-binding"/>
    <property type="match status" value="1"/>
</dbReference>
<dbReference type="SUPFAM" id="SSF47336">
    <property type="entry name" value="ACP-like"/>
    <property type="match status" value="1"/>
</dbReference>
<dbReference type="PROSITE" id="PS50075">
    <property type="entry name" value="CARRIER"/>
    <property type="match status" value="1"/>
</dbReference>
<dbReference type="PROSITE" id="PS00012">
    <property type="entry name" value="PHOSPHOPANTETHEINE"/>
    <property type="match status" value="1"/>
</dbReference>
<accession>Q1QX53</accession>
<gene>
    <name evidence="1" type="primary">acpP</name>
    <name type="ordered locus">Csal_1602</name>
</gene>
<feature type="chain" id="PRO_1000066590" description="Acyl carrier protein">
    <location>
        <begin position="1"/>
        <end position="77"/>
    </location>
</feature>
<feature type="domain" description="Carrier" evidence="2">
    <location>
        <begin position="2"/>
        <end position="77"/>
    </location>
</feature>
<feature type="modified residue" description="O-(pantetheine 4'-phosphoryl)serine" evidence="2">
    <location>
        <position position="37"/>
    </location>
</feature>
<reference key="1">
    <citation type="journal article" date="2011" name="Stand. Genomic Sci.">
        <title>Complete genome sequence of the halophilic and highly halotolerant Chromohalobacter salexigens type strain (1H11(T)).</title>
        <authorList>
            <person name="Copeland A."/>
            <person name="O'Connor K."/>
            <person name="Lucas S."/>
            <person name="Lapidus A."/>
            <person name="Berry K.W."/>
            <person name="Detter J.C."/>
            <person name="Del Rio T.G."/>
            <person name="Hammon N."/>
            <person name="Dalin E."/>
            <person name="Tice H."/>
            <person name="Pitluck S."/>
            <person name="Bruce D."/>
            <person name="Goodwin L."/>
            <person name="Han C."/>
            <person name="Tapia R."/>
            <person name="Saunders E."/>
            <person name="Schmutz J."/>
            <person name="Brettin T."/>
            <person name="Larimer F."/>
            <person name="Land M."/>
            <person name="Hauser L."/>
            <person name="Vargas C."/>
            <person name="Nieto J.J."/>
            <person name="Kyrpides N.C."/>
            <person name="Ivanova N."/>
            <person name="Goker M."/>
            <person name="Klenk H.P."/>
            <person name="Csonka L.N."/>
            <person name="Woyke T."/>
        </authorList>
    </citation>
    <scope>NUCLEOTIDE SEQUENCE [LARGE SCALE GENOMIC DNA]</scope>
    <source>
        <strain>ATCC BAA-138 / DSM 3043 / CIP 106854 / NCIMB 13768 / 1H11</strain>
    </source>
</reference>
<protein>
    <recommendedName>
        <fullName evidence="1">Acyl carrier protein</fullName>
        <shortName evidence="1">ACP</shortName>
    </recommendedName>
</protein>